<reference key="1">
    <citation type="submission" date="2009-05" db="EMBL/GenBank/DDBJ databases">
        <title>Complete sequence of Tolumonas auensis DSM 9187.</title>
        <authorList>
            <consortium name="US DOE Joint Genome Institute"/>
            <person name="Lucas S."/>
            <person name="Copeland A."/>
            <person name="Lapidus A."/>
            <person name="Glavina del Rio T."/>
            <person name="Tice H."/>
            <person name="Bruce D."/>
            <person name="Goodwin L."/>
            <person name="Pitluck S."/>
            <person name="Chertkov O."/>
            <person name="Brettin T."/>
            <person name="Detter J.C."/>
            <person name="Han C."/>
            <person name="Larimer F."/>
            <person name="Land M."/>
            <person name="Hauser L."/>
            <person name="Kyrpides N."/>
            <person name="Mikhailova N."/>
            <person name="Spring S."/>
            <person name="Beller H."/>
        </authorList>
    </citation>
    <scope>NUCLEOTIDE SEQUENCE [LARGE SCALE GENOMIC DNA]</scope>
    <source>
        <strain>DSM 9187 / NBRC 110442 / TA 4</strain>
    </source>
</reference>
<feature type="chain" id="PRO_1000213020" description="2,3,4,5-tetrahydropyridine-2,6-dicarboxylate N-succinyltransferase">
    <location>
        <begin position="1"/>
        <end position="275"/>
    </location>
</feature>
<feature type="binding site" evidence="1">
    <location>
        <position position="104"/>
    </location>
    <ligand>
        <name>substrate</name>
    </ligand>
</feature>
<feature type="binding site" evidence="1">
    <location>
        <position position="141"/>
    </location>
    <ligand>
        <name>substrate</name>
    </ligand>
</feature>
<gene>
    <name evidence="1" type="primary">dapD</name>
    <name type="ordered locus">Tola_2115</name>
</gene>
<sequence length="275" mass="29650">MSDLQHIIDDAFERRDSITPNSVDPIVREAVLQTIDMLDAGQIRVAEKIAGEWVVHQWVKKAVLLYFRINDNAVLQGAGTQYYDKVPLKFADYTPERFKQESIRVVPPATVRKGSFIARNAVLLPSYVNIGAYVGEGSMVDTWATVGSCAQIGANVHLSGGVGIGGVLEPLQAGPTIIEDNCFIGARSEVVEGVIVGEGSVISMGVFIGQSTRIYDRETGEIHYGRVPPGSVVVSGSLPSKCGKYSLYAAVIVKKVDAKTRSKVGINALLRSIDD</sequence>
<name>DAPD_TOLAT</name>
<comment type="catalytic activity">
    <reaction evidence="1">
        <text>(S)-2,3,4,5-tetrahydrodipicolinate + succinyl-CoA + H2O = (S)-2-succinylamino-6-oxoheptanedioate + CoA</text>
        <dbReference type="Rhea" id="RHEA:17325"/>
        <dbReference type="ChEBI" id="CHEBI:15377"/>
        <dbReference type="ChEBI" id="CHEBI:15685"/>
        <dbReference type="ChEBI" id="CHEBI:16845"/>
        <dbReference type="ChEBI" id="CHEBI:57287"/>
        <dbReference type="ChEBI" id="CHEBI:57292"/>
        <dbReference type="EC" id="2.3.1.117"/>
    </reaction>
</comment>
<comment type="pathway">
    <text evidence="1">Amino-acid biosynthesis; L-lysine biosynthesis via DAP pathway; LL-2,6-diaminopimelate from (S)-tetrahydrodipicolinate (succinylase route): step 1/3.</text>
</comment>
<comment type="subunit">
    <text evidence="1">Homotrimer.</text>
</comment>
<comment type="subcellular location">
    <subcellularLocation>
        <location evidence="1">Cytoplasm</location>
    </subcellularLocation>
</comment>
<comment type="similarity">
    <text evidence="1">Belongs to the transferase hexapeptide repeat family.</text>
</comment>
<keyword id="KW-0012">Acyltransferase</keyword>
<keyword id="KW-0028">Amino-acid biosynthesis</keyword>
<keyword id="KW-0963">Cytoplasm</keyword>
<keyword id="KW-0220">Diaminopimelate biosynthesis</keyword>
<keyword id="KW-0457">Lysine biosynthesis</keyword>
<keyword id="KW-1185">Reference proteome</keyword>
<keyword id="KW-0677">Repeat</keyword>
<keyword id="KW-0808">Transferase</keyword>
<evidence type="ECO:0000255" key="1">
    <source>
        <dbReference type="HAMAP-Rule" id="MF_00811"/>
    </source>
</evidence>
<organism>
    <name type="scientific">Tolumonas auensis (strain DSM 9187 / NBRC 110442 / TA 4)</name>
    <dbReference type="NCBI Taxonomy" id="595494"/>
    <lineage>
        <taxon>Bacteria</taxon>
        <taxon>Pseudomonadati</taxon>
        <taxon>Pseudomonadota</taxon>
        <taxon>Gammaproteobacteria</taxon>
        <taxon>Aeromonadales</taxon>
        <taxon>Aeromonadaceae</taxon>
        <taxon>Tolumonas</taxon>
    </lineage>
</organism>
<dbReference type="EC" id="2.3.1.117" evidence="1"/>
<dbReference type="EMBL" id="CP001616">
    <property type="protein sequence ID" value="ACQ93714.1"/>
    <property type="molecule type" value="Genomic_DNA"/>
</dbReference>
<dbReference type="RefSeq" id="WP_015879182.1">
    <property type="nucleotide sequence ID" value="NC_012691.1"/>
</dbReference>
<dbReference type="SMR" id="C4L868"/>
<dbReference type="STRING" id="595494.Tola_2115"/>
<dbReference type="KEGG" id="tau:Tola_2115"/>
<dbReference type="eggNOG" id="COG2171">
    <property type="taxonomic scope" value="Bacteria"/>
</dbReference>
<dbReference type="HOGENOM" id="CLU_050859_0_1_6"/>
<dbReference type="OrthoDB" id="9775362at2"/>
<dbReference type="UniPathway" id="UPA00034">
    <property type="reaction ID" value="UER00019"/>
</dbReference>
<dbReference type="Proteomes" id="UP000009073">
    <property type="component" value="Chromosome"/>
</dbReference>
<dbReference type="GO" id="GO:0005737">
    <property type="term" value="C:cytoplasm"/>
    <property type="evidence" value="ECO:0007669"/>
    <property type="project" value="UniProtKB-SubCell"/>
</dbReference>
<dbReference type="GO" id="GO:0008666">
    <property type="term" value="F:2,3,4,5-tetrahydropyridine-2,6-dicarboxylate N-succinyltransferase activity"/>
    <property type="evidence" value="ECO:0007669"/>
    <property type="project" value="UniProtKB-UniRule"/>
</dbReference>
<dbReference type="GO" id="GO:0016779">
    <property type="term" value="F:nucleotidyltransferase activity"/>
    <property type="evidence" value="ECO:0007669"/>
    <property type="project" value="TreeGrafter"/>
</dbReference>
<dbReference type="GO" id="GO:0019877">
    <property type="term" value="P:diaminopimelate biosynthetic process"/>
    <property type="evidence" value="ECO:0007669"/>
    <property type="project" value="UniProtKB-UniRule"/>
</dbReference>
<dbReference type="GO" id="GO:0009089">
    <property type="term" value="P:lysine biosynthetic process via diaminopimelate"/>
    <property type="evidence" value="ECO:0007669"/>
    <property type="project" value="UniProtKB-UniRule"/>
</dbReference>
<dbReference type="CDD" id="cd03350">
    <property type="entry name" value="LbH_THP_succinylT"/>
    <property type="match status" value="1"/>
</dbReference>
<dbReference type="Gene3D" id="2.160.10.10">
    <property type="entry name" value="Hexapeptide repeat proteins"/>
    <property type="match status" value="1"/>
</dbReference>
<dbReference type="Gene3D" id="1.10.166.10">
    <property type="entry name" value="Tetrahydrodipicolinate-N-succinyltransferase, N-terminal domain"/>
    <property type="match status" value="1"/>
</dbReference>
<dbReference type="HAMAP" id="MF_00811">
    <property type="entry name" value="DapD"/>
    <property type="match status" value="1"/>
</dbReference>
<dbReference type="InterPro" id="IPR005664">
    <property type="entry name" value="DapD_Trfase_Hexpep_rpt_fam"/>
</dbReference>
<dbReference type="InterPro" id="IPR001451">
    <property type="entry name" value="Hexapep"/>
</dbReference>
<dbReference type="InterPro" id="IPR018357">
    <property type="entry name" value="Hexapep_transf_CS"/>
</dbReference>
<dbReference type="InterPro" id="IPR023180">
    <property type="entry name" value="THP_succinylTrfase_dom1"/>
</dbReference>
<dbReference type="InterPro" id="IPR037133">
    <property type="entry name" value="THP_succinylTrfase_N_sf"/>
</dbReference>
<dbReference type="InterPro" id="IPR011004">
    <property type="entry name" value="Trimer_LpxA-like_sf"/>
</dbReference>
<dbReference type="NCBIfam" id="TIGR00965">
    <property type="entry name" value="dapD"/>
    <property type="match status" value="1"/>
</dbReference>
<dbReference type="NCBIfam" id="NF008808">
    <property type="entry name" value="PRK11830.1"/>
    <property type="match status" value="1"/>
</dbReference>
<dbReference type="PANTHER" id="PTHR19136:SF52">
    <property type="entry name" value="2,3,4,5-TETRAHYDROPYRIDINE-2,6-DICARBOXYLATE N-SUCCINYLTRANSFERASE"/>
    <property type="match status" value="1"/>
</dbReference>
<dbReference type="PANTHER" id="PTHR19136">
    <property type="entry name" value="MOLYBDENUM COFACTOR GUANYLYLTRANSFERASE"/>
    <property type="match status" value="1"/>
</dbReference>
<dbReference type="Pfam" id="PF14602">
    <property type="entry name" value="Hexapep_2"/>
    <property type="match status" value="1"/>
</dbReference>
<dbReference type="Pfam" id="PF14805">
    <property type="entry name" value="THDPS_N_2"/>
    <property type="match status" value="1"/>
</dbReference>
<dbReference type="SUPFAM" id="SSF51161">
    <property type="entry name" value="Trimeric LpxA-like enzymes"/>
    <property type="match status" value="1"/>
</dbReference>
<dbReference type="PROSITE" id="PS00101">
    <property type="entry name" value="HEXAPEP_TRANSFERASES"/>
    <property type="match status" value="1"/>
</dbReference>
<accession>C4L868</accession>
<proteinExistence type="inferred from homology"/>
<protein>
    <recommendedName>
        <fullName evidence="1">2,3,4,5-tetrahydropyridine-2,6-dicarboxylate N-succinyltransferase</fullName>
        <ecNumber evidence="1">2.3.1.117</ecNumber>
    </recommendedName>
    <alternativeName>
        <fullName evidence="1">Tetrahydrodipicolinate N-succinyltransferase</fullName>
        <shortName evidence="1">THDP succinyltransferase</shortName>
        <shortName evidence="1">THP succinyltransferase</shortName>
        <shortName evidence="1">Tetrahydropicolinate succinylase</shortName>
    </alternativeName>
</protein>